<evidence type="ECO:0000250" key="1">
    <source>
        <dbReference type="UniProtKB" id="P9WHL7"/>
    </source>
</evidence>
<evidence type="ECO:0000255" key="2">
    <source>
        <dbReference type="HAMAP-Rule" id="MF_00420"/>
    </source>
</evidence>
<gene>
    <name evidence="2" type="primary">purL</name>
    <name type="ordered locus">BCG_0855</name>
</gene>
<name>PURL_MYCBP</name>
<organism>
    <name type="scientific">Mycobacterium bovis (strain BCG / Pasteur 1173P2)</name>
    <dbReference type="NCBI Taxonomy" id="410289"/>
    <lineage>
        <taxon>Bacteria</taxon>
        <taxon>Bacillati</taxon>
        <taxon>Actinomycetota</taxon>
        <taxon>Actinomycetes</taxon>
        <taxon>Mycobacteriales</taxon>
        <taxon>Mycobacteriaceae</taxon>
        <taxon>Mycobacterium</taxon>
        <taxon>Mycobacterium tuberculosis complex</taxon>
    </lineage>
</organism>
<reference key="1">
    <citation type="journal article" date="2007" name="Proc. Natl. Acad. Sci. U.S.A.">
        <title>Genome plasticity of BCG and impact on vaccine efficacy.</title>
        <authorList>
            <person name="Brosch R."/>
            <person name="Gordon S.V."/>
            <person name="Garnier T."/>
            <person name="Eiglmeier K."/>
            <person name="Frigui W."/>
            <person name="Valenti P."/>
            <person name="Dos Santos S."/>
            <person name="Duthoy S."/>
            <person name="Lacroix C."/>
            <person name="Garcia-Pelayo C."/>
            <person name="Inwald J.K."/>
            <person name="Golby P."/>
            <person name="Garcia J.N."/>
            <person name="Hewinson R.G."/>
            <person name="Behr M.A."/>
            <person name="Quail M.A."/>
            <person name="Churcher C."/>
            <person name="Barrell B.G."/>
            <person name="Parkhill J."/>
            <person name="Cole S.T."/>
        </authorList>
    </citation>
    <scope>NUCLEOTIDE SEQUENCE [LARGE SCALE GENOMIC DNA]</scope>
    <source>
        <strain>BCG / Pasteur 1173P2</strain>
    </source>
</reference>
<keyword id="KW-0067">ATP-binding</keyword>
<keyword id="KW-0963">Cytoplasm</keyword>
<keyword id="KW-0436">Ligase</keyword>
<keyword id="KW-0460">Magnesium</keyword>
<keyword id="KW-0479">Metal-binding</keyword>
<keyword id="KW-0547">Nucleotide-binding</keyword>
<keyword id="KW-0658">Purine biosynthesis</keyword>
<protein>
    <recommendedName>
        <fullName evidence="2">Phosphoribosylformylglycinamidine synthase subunit PurL</fullName>
        <shortName evidence="2">FGAM synthase</shortName>
        <ecNumber evidence="2">6.3.5.3</ecNumber>
    </recommendedName>
    <alternativeName>
        <fullName evidence="2">Formylglycinamide ribonucleotide amidotransferase subunit II</fullName>
        <shortName evidence="2">FGAR amidotransferase II</shortName>
        <shortName evidence="2">FGAR-AT II</shortName>
    </alternativeName>
    <alternativeName>
        <fullName evidence="2">Glutamine amidotransferase PurL</fullName>
    </alternativeName>
    <alternativeName>
        <fullName evidence="2">Phosphoribosylformylglycinamidine synthase subunit II</fullName>
    </alternativeName>
</protein>
<proteinExistence type="inferred from homology"/>
<feature type="chain" id="PRO_1000050324" description="Phosphoribosylformylglycinamidine synthase subunit PurL">
    <location>
        <begin position="1"/>
        <end position="766"/>
    </location>
</feature>
<feature type="active site" evidence="2">
    <location>
        <position position="66"/>
    </location>
</feature>
<feature type="active site" description="Proton acceptor" evidence="2">
    <location>
        <position position="117"/>
    </location>
</feature>
<feature type="binding site" evidence="2">
    <location>
        <position position="69"/>
    </location>
    <ligand>
        <name>ATP</name>
        <dbReference type="ChEBI" id="CHEBI:30616"/>
    </ligand>
</feature>
<feature type="binding site" evidence="2">
    <location>
        <position position="113"/>
    </location>
    <ligand>
        <name>ATP</name>
        <dbReference type="ChEBI" id="CHEBI:30616"/>
    </ligand>
</feature>
<feature type="binding site" evidence="2">
    <location>
        <position position="115"/>
    </location>
    <ligand>
        <name>Mg(2+)</name>
        <dbReference type="ChEBI" id="CHEBI:18420"/>
        <label>1</label>
    </ligand>
</feature>
<feature type="binding site" evidence="2">
    <location>
        <begin position="116"/>
        <end position="119"/>
    </location>
    <ligand>
        <name>substrate</name>
    </ligand>
</feature>
<feature type="binding site" evidence="2">
    <location>
        <position position="138"/>
    </location>
    <ligand>
        <name>substrate</name>
    </ligand>
</feature>
<feature type="binding site" evidence="2">
    <location>
        <position position="139"/>
    </location>
    <ligand>
        <name>Mg(2+)</name>
        <dbReference type="ChEBI" id="CHEBI:18420"/>
        <label>2</label>
    </ligand>
</feature>
<feature type="binding site" evidence="2">
    <location>
        <position position="264"/>
    </location>
    <ligand>
        <name>substrate</name>
    </ligand>
</feature>
<feature type="binding site" evidence="2">
    <location>
        <position position="292"/>
    </location>
    <ligand>
        <name>Mg(2+)</name>
        <dbReference type="ChEBI" id="CHEBI:18420"/>
        <label>2</label>
    </ligand>
</feature>
<feature type="binding site" evidence="2">
    <location>
        <begin position="336"/>
        <end position="338"/>
    </location>
    <ligand>
        <name>substrate</name>
    </ligand>
</feature>
<feature type="binding site" evidence="2">
    <location>
        <position position="524"/>
    </location>
    <ligand>
        <name>ATP</name>
        <dbReference type="ChEBI" id="CHEBI:30616"/>
    </ligand>
</feature>
<feature type="binding site" evidence="2">
    <location>
        <position position="561"/>
    </location>
    <ligand>
        <name>ATP</name>
        <dbReference type="ChEBI" id="CHEBI:30616"/>
    </ligand>
</feature>
<feature type="binding site" evidence="2">
    <location>
        <position position="562"/>
    </location>
    <ligand>
        <name>Mg(2+)</name>
        <dbReference type="ChEBI" id="CHEBI:18420"/>
        <label>1</label>
    </ligand>
</feature>
<feature type="binding site" evidence="2">
    <location>
        <position position="564"/>
    </location>
    <ligand>
        <name>substrate</name>
    </ligand>
</feature>
<accession>A1KGT6</accession>
<dbReference type="EC" id="6.3.5.3" evidence="2"/>
<dbReference type="EMBL" id="AM408590">
    <property type="protein sequence ID" value="CAL70841.1"/>
    <property type="status" value="ALT_INIT"/>
    <property type="molecule type" value="Genomic_DNA"/>
</dbReference>
<dbReference type="SMR" id="A1KGT6"/>
<dbReference type="KEGG" id="mbb:BCG_0855"/>
<dbReference type="HOGENOM" id="CLU_003100_0_1_11"/>
<dbReference type="UniPathway" id="UPA00074">
    <property type="reaction ID" value="UER00128"/>
</dbReference>
<dbReference type="Proteomes" id="UP000001472">
    <property type="component" value="Chromosome"/>
</dbReference>
<dbReference type="GO" id="GO:0005737">
    <property type="term" value="C:cytoplasm"/>
    <property type="evidence" value="ECO:0007669"/>
    <property type="project" value="UniProtKB-SubCell"/>
</dbReference>
<dbReference type="GO" id="GO:0005524">
    <property type="term" value="F:ATP binding"/>
    <property type="evidence" value="ECO:0007669"/>
    <property type="project" value="UniProtKB-UniRule"/>
</dbReference>
<dbReference type="GO" id="GO:0000287">
    <property type="term" value="F:magnesium ion binding"/>
    <property type="evidence" value="ECO:0007669"/>
    <property type="project" value="UniProtKB-UniRule"/>
</dbReference>
<dbReference type="GO" id="GO:0004642">
    <property type="term" value="F:phosphoribosylformylglycinamidine synthase activity"/>
    <property type="evidence" value="ECO:0007669"/>
    <property type="project" value="UniProtKB-UniRule"/>
</dbReference>
<dbReference type="GO" id="GO:0006189">
    <property type="term" value="P:'de novo' IMP biosynthetic process"/>
    <property type="evidence" value="ECO:0007669"/>
    <property type="project" value="UniProtKB-UniRule"/>
</dbReference>
<dbReference type="CDD" id="cd02203">
    <property type="entry name" value="PurL_repeat1"/>
    <property type="match status" value="1"/>
</dbReference>
<dbReference type="CDD" id="cd02204">
    <property type="entry name" value="PurL_repeat2"/>
    <property type="match status" value="1"/>
</dbReference>
<dbReference type="FunFam" id="3.30.1330.10:FF:000004">
    <property type="entry name" value="Phosphoribosylformylglycinamidine synthase subunit PurL"/>
    <property type="match status" value="1"/>
</dbReference>
<dbReference type="FunFam" id="3.30.1330.10:FF:000021">
    <property type="entry name" value="Phosphoribosylformylglycinamidine synthase subunit PurL"/>
    <property type="match status" value="1"/>
</dbReference>
<dbReference type="FunFam" id="3.90.650.10:FF:000009">
    <property type="entry name" value="Phosphoribosylformylglycinamidine synthase subunit PurL"/>
    <property type="match status" value="1"/>
</dbReference>
<dbReference type="FunFam" id="3.90.650.10:FF:000026">
    <property type="entry name" value="Phosphoribosylformylglycinamidine synthase subunit PurL"/>
    <property type="match status" value="1"/>
</dbReference>
<dbReference type="Gene3D" id="3.90.650.10">
    <property type="entry name" value="PurM-like C-terminal domain"/>
    <property type="match status" value="2"/>
</dbReference>
<dbReference type="Gene3D" id="3.30.1330.10">
    <property type="entry name" value="PurM-like, N-terminal domain"/>
    <property type="match status" value="2"/>
</dbReference>
<dbReference type="HAMAP" id="MF_00420">
    <property type="entry name" value="PurL_2"/>
    <property type="match status" value="1"/>
</dbReference>
<dbReference type="InterPro" id="IPR010074">
    <property type="entry name" value="PRibForGlyAmidine_synth_PurL"/>
</dbReference>
<dbReference type="InterPro" id="IPR041609">
    <property type="entry name" value="PurL_linker"/>
</dbReference>
<dbReference type="InterPro" id="IPR010918">
    <property type="entry name" value="PurM-like_C_dom"/>
</dbReference>
<dbReference type="InterPro" id="IPR036676">
    <property type="entry name" value="PurM-like_C_sf"/>
</dbReference>
<dbReference type="InterPro" id="IPR016188">
    <property type="entry name" value="PurM-like_N"/>
</dbReference>
<dbReference type="InterPro" id="IPR036921">
    <property type="entry name" value="PurM-like_N_sf"/>
</dbReference>
<dbReference type="NCBIfam" id="TIGR01736">
    <property type="entry name" value="FGAM_synth_II"/>
    <property type="match status" value="1"/>
</dbReference>
<dbReference type="NCBIfam" id="NF002290">
    <property type="entry name" value="PRK01213.1"/>
    <property type="match status" value="1"/>
</dbReference>
<dbReference type="PANTHER" id="PTHR43555">
    <property type="entry name" value="PHOSPHORIBOSYLFORMYLGLYCINAMIDINE SYNTHASE SUBUNIT PURL"/>
    <property type="match status" value="1"/>
</dbReference>
<dbReference type="PANTHER" id="PTHR43555:SF1">
    <property type="entry name" value="PHOSPHORIBOSYLFORMYLGLYCINAMIDINE SYNTHASE SUBUNIT PURL"/>
    <property type="match status" value="1"/>
</dbReference>
<dbReference type="Pfam" id="PF00586">
    <property type="entry name" value="AIRS"/>
    <property type="match status" value="2"/>
</dbReference>
<dbReference type="Pfam" id="PF02769">
    <property type="entry name" value="AIRS_C"/>
    <property type="match status" value="2"/>
</dbReference>
<dbReference type="Pfam" id="PF18072">
    <property type="entry name" value="FGAR-AT_linker"/>
    <property type="match status" value="1"/>
</dbReference>
<dbReference type="PIRSF" id="PIRSF001587">
    <property type="entry name" value="FGAM_synthase_II"/>
    <property type="match status" value="1"/>
</dbReference>
<dbReference type="SUPFAM" id="SSF56042">
    <property type="entry name" value="PurM C-terminal domain-like"/>
    <property type="match status" value="2"/>
</dbReference>
<dbReference type="SUPFAM" id="SSF55326">
    <property type="entry name" value="PurM N-terminal domain-like"/>
    <property type="match status" value="2"/>
</dbReference>
<sequence length="766" mass="80802">MSPLARTPRKTSVLDTVEHAATTPDQPQPYGELGLKDDEYRRIRQILGRRPTDTELAMYSVMWSEHCSYKSSKVHLRYFGETTSDEMRAAMLAGIGENAGVVDIGDGWAVTFKVESHNHPSYVEPYQGAATGVGGIVRDIMAMGARPVAVMDQLRFGAADAPDTRRVLDGVVRGIGGYGNSLGLPNIGGETVFDPCYAGNPLVNALCVGVLRQEDLHLAFASGAGNKIILFGARTGLDGIGGVSVLASDTFDAEGSRKKLPSVQVGDPFMEKVLIECCLELYAGGLVIGIQDLGGAGLSCATSELASAGDGGMTIQLDSVPLRAKEMTPAEVLCSESQERMCAVVSPKNVDAFLAVCRKWEVLATVIGEVTDGDRLQITWHGETVVDVPPRTVAHEGPVYQRPVARPDTQDALNADRSAKLSRPVTGDELRATLLALLGSPHLCSRAFITEQYDRYVRGNTVLAEHADGGMLRIDESTGRGIAVSTDASGRYTLLDPYAGAQLALAEAYRNVAVTGATPVAVTNCLNFGSPEDPGVMWQFTQAVRGLADGCADLGIPVTGGNVSFYNQTGSAAILPTPVVGVLGVIDDVRRRIPTGLGAEPGETLMLLGDTRDEFDGSVWAQVTADHLGGLPPVVDLAREKLLAAVLSSASRDGLVSAAHDLSEGGLAQAIVESALAGETGCRIVLPEGADPFVLLFSESAGRVLVAVPRTEESRFRGMCEARGLPAVRIGVVDQGSDAVEVQGLFAVSLAELRATSEAVLPRYFG</sequence>
<comment type="function">
    <text evidence="2">Part of the phosphoribosylformylglycinamidine synthase complex involved in the purines biosynthetic pathway. Catalyzes the ATP-dependent conversion of formylglycinamide ribonucleotide (FGAR) and glutamine to yield formylglycinamidine ribonucleotide (FGAM) and glutamate. The FGAM synthase complex is composed of three subunits. PurQ produces an ammonia molecule by converting glutamine to glutamate. PurL transfers the ammonia molecule to FGAR to form FGAM in an ATP-dependent manner. PurS interacts with PurQ and PurL and is thought to assist in the transfer of the ammonia molecule from PurQ to PurL.</text>
</comment>
<comment type="catalytic activity">
    <reaction evidence="2">
        <text>N(2)-formyl-N(1)-(5-phospho-beta-D-ribosyl)glycinamide + L-glutamine + ATP + H2O = 2-formamido-N(1)-(5-O-phospho-beta-D-ribosyl)acetamidine + L-glutamate + ADP + phosphate + H(+)</text>
        <dbReference type="Rhea" id="RHEA:17129"/>
        <dbReference type="ChEBI" id="CHEBI:15377"/>
        <dbReference type="ChEBI" id="CHEBI:15378"/>
        <dbReference type="ChEBI" id="CHEBI:29985"/>
        <dbReference type="ChEBI" id="CHEBI:30616"/>
        <dbReference type="ChEBI" id="CHEBI:43474"/>
        <dbReference type="ChEBI" id="CHEBI:58359"/>
        <dbReference type="ChEBI" id="CHEBI:147286"/>
        <dbReference type="ChEBI" id="CHEBI:147287"/>
        <dbReference type="ChEBI" id="CHEBI:456216"/>
        <dbReference type="EC" id="6.3.5.3"/>
    </reaction>
</comment>
<comment type="pathway">
    <text evidence="2">Purine metabolism; IMP biosynthesis via de novo pathway; 5-amino-1-(5-phospho-D-ribosyl)imidazole from N(2)-formyl-N(1)-(5-phospho-D-ribosyl)glycinamide: step 1/2.</text>
</comment>
<comment type="subunit">
    <text evidence="2">Monomer. Part of the FGAM synthase complex composed of 1 PurL, 1 PurQ and 2 PurS subunits.</text>
</comment>
<comment type="subcellular location">
    <subcellularLocation>
        <location evidence="2">Cytoplasm</location>
    </subcellularLocation>
</comment>
<comment type="similarity">
    <text evidence="2">Belongs to the FGAMS family.</text>
</comment>
<comment type="sequence caution" evidence="1">
    <conflict type="erroneous initiation">
        <sequence resource="EMBL-CDS" id="CAL70841"/>
    </conflict>
    <text>Truncated N-terminus.</text>
</comment>